<comment type="function">
    <text evidence="1">Has a glutathione-disulfide oxidoreductase activity in the presence of NADPH and glutathione reductase. Reduces low molecular weight disulfides and proteins (By similarity).</text>
</comment>
<comment type="subunit">
    <text evidence="1">Monomer.</text>
</comment>
<comment type="subcellular location">
    <subcellularLocation>
        <location evidence="1">Cytoplasm</location>
    </subcellularLocation>
</comment>
<comment type="similarity">
    <text evidence="3">Belongs to the glutaredoxin family.</text>
</comment>
<name>GLRX1_RICFE</name>
<reference key="1">
    <citation type="journal article" date="2005" name="PLoS Biol.">
        <title>The genome sequence of Rickettsia felis identifies the first putative conjugative plasmid in an obligate intracellular parasite.</title>
        <authorList>
            <person name="Ogata H."/>
            <person name="Renesto P."/>
            <person name="Audic S."/>
            <person name="Robert C."/>
            <person name="Blanc G."/>
            <person name="Fournier P.-E."/>
            <person name="Parinello H."/>
            <person name="Claverie J.-M."/>
            <person name="Raoult D."/>
        </authorList>
    </citation>
    <scope>NUCLEOTIDE SEQUENCE [LARGE SCALE GENOMIC DNA]</scope>
    <source>
        <strain>ATCC VR-1525 / URRWXCal2</strain>
    </source>
</reference>
<evidence type="ECO:0000250" key="1"/>
<evidence type="ECO:0000255" key="2">
    <source>
        <dbReference type="PROSITE-ProRule" id="PRU00686"/>
    </source>
</evidence>
<evidence type="ECO:0000305" key="3"/>
<organism>
    <name type="scientific">Rickettsia felis (strain ATCC VR-1525 / URRWXCal2)</name>
    <name type="common">Rickettsia azadi</name>
    <dbReference type="NCBI Taxonomy" id="315456"/>
    <lineage>
        <taxon>Bacteria</taxon>
        <taxon>Pseudomonadati</taxon>
        <taxon>Pseudomonadota</taxon>
        <taxon>Alphaproteobacteria</taxon>
        <taxon>Rickettsiales</taxon>
        <taxon>Rickettsiaceae</taxon>
        <taxon>Rickettsieae</taxon>
        <taxon>Rickettsia</taxon>
        <taxon>spotted fever group</taxon>
    </lineage>
</organism>
<accession>Q4UKL7</accession>
<sequence length="102" mass="11396">MNKAILHTIIIYTLASCPYCIKAKALLDEKNVVYEEIEVSNFTQEEKEKFIKKSGGKKTVPQIFIDNIHVGGCDALFDLEKEGRLDKLLEGQPKKKMPAAGA</sequence>
<gene>
    <name type="primary">grxC1</name>
    <name type="synonym">grx</name>
    <name type="ordered locus">RF_1059</name>
</gene>
<protein>
    <recommendedName>
        <fullName>Glutaredoxin 1</fullName>
    </recommendedName>
</protein>
<feature type="chain" id="PRO_0000288736" description="Glutaredoxin 1">
    <location>
        <begin position="1"/>
        <end position="102"/>
    </location>
</feature>
<feature type="domain" description="Glutaredoxin" evidence="2">
    <location>
        <begin position="1"/>
        <end position="96"/>
    </location>
</feature>
<feature type="disulfide bond" description="Redox-active" evidence="1">
    <location>
        <begin position="17"/>
        <end position="20"/>
    </location>
</feature>
<proteinExistence type="inferred from homology"/>
<dbReference type="EMBL" id="CP000053">
    <property type="protein sequence ID" value="AAY61910.1"/>
    <property type="molecule type" value="Genomic_DNA"/>
</dbReference>
<dbReference type="SMR" id="Q4UKL7"/>
<dbReference type="STRING" id="315456.RF_1059"/>
<dbReference type="KEGG" id="rfe:RF_1059"/>
<dbReference type="eggNOG" id="COG0695">
    <property type="taxonomic scope" value="Bacteria"/>
</dbReference>
<dbReference type="HOGENOM" id="CLU_026126_7_3_5"/>
<dbReference type="OrthoDB" id="9814618at2"/>
<dbReference type="Proteomes" id="UP000008548">
    <property type="component" value="Chromosome"/>
</dbReference>
<dbReference type="GO" id="GO:0005737">
    <property type="term" value="C:cytoplasm"/>
    <property type="evidence" value="ECO:0007669"/>
    <property type="project" value="UniProtKB-SubCell"/>
</dbReference>
<dbReference type="GO" id="GO:0015038">
    <property type="term" value="F:glutathione disulfide oxidoreductase activity"/>
    <property type="evidence" value="ECO:0007669"/>
    <property type="project" value="TreeGrafter"/>
</dbReference>
<dbReference type="GO" id="GO:0045454">
    <property type="term" value="P:cell redox homeostasis"/>
    <property type="evidence" value="ECO:0007669"/>
    <property type="project" value="InterPro"/>
</dbReference>
<dbReference type="GO" id="GO:0034599">
    <property type="term" value="P:cellular response to oxidative stress"/>
    <property type="evidence" value="ECO:0007669"/>
    <property type="project" value="TreeGrafter"/>
</dbReference>
<dbReference type="CDD" id="cd03418">
    <property type="entry name" value="GRX_GRXb_1_3_like"/>
    <property type="match status" value="1"/>
</dbReference>
<dbReference type="Gene3D" id="3.40.30.10">
    <property type="entry name" value="Glutaredoxin"/>
    <property type="match status" value="1"/>
</dbReference>
<dbReference type="InterPro" id="IPR011767">
    <property type="entry name" value="GLR_AS"/>
</dbReference>
<dbReference type="InterPro" id="IPR002109">
    <property type="entry name" value="Glutaredoxin"/>
</dbReference>
<dbReference type="InterPro" id="IPR014025">
    <property type="entry name" value="Glutaredoxin_subgr"/>
</dbReference>
<dbReference type="InterPro" id="IPR011900">
    <property type="entry name" value="GRX_bact"/>
</dbReference>
<dbReference type="InterPro" id="IPR036249">
    <property type="entry name" value="Thioredoxin-like_sf"/>
</dbReference>
<dbReference type="NCBIfam" id="TIGR02181">
    <property type="entry name" value="GRX_bact"/>
    <property type="match status" value="1"/>
</dbReference>
<dbReference type="PANTHER" id="PTHR45694">
    <property type="entry name" value="GLUTAREDOXIN 2"/>
    <property type="match status" value="1"/>
</dbReference>
<dbReference type="PANTHER" id="PTHR45694:SF18">
    <property type="entry name" value="GLUTAREDOXIN-1-RELATED"/>
    <property type="match status" value="1"/>
</dbReference>
<dbReference type="Pfam" id="PF00462">
    <property type="entry name" value="Glutaredoxin"/>
    <property type="match status" value="1"/>
</dbReference>
<dbReference type="PRINTS" id="PR00160">
    <property type="entry name" value="GLUTAREDOXIN"/>
</dbReference>
<dbReference type="SUPFAM" id="SSF52833">
    <property type="entry name" value="Thioredoxin-like"/>
    <property type="match status" value="1"/>
</dbReference>
<dbReference type="PROSITE" id="PS00195">
    <property type="entry name" value="GLUTAREDOXIN_1"/>
    <property type="match status" value="1"/>
</dbReference>
<dbReference type="PROSITE" id="PS51354">
    <property type="entry name" value="GLUTAREDOXIN_2"/>
    <property type="match status" value="1"/>
</dbReference>
<keyword id="KW-0963">Cytoplasm</keyword>
<keyword id="KW-1015">Disulfide bond</keyword>
<keyword id="KW-0249">Electron transport</keyword>
<keyword id="KW-0676">Redox-active center</keyword>
<keyword id="KW-0813">Transport</keyword>